<proteinExistence type="inferred from homology"/>
<sequence length="311" mass="35366">MSLKGRHLIDPNQLSLAELDNIITLGLEIYRNPNHYREICKGKILGTLFYEPSTRTRLSFESAMLRMGGTVLGFSDANTSSAKKGESIADTIRVLDDYADLLVMRHPREGAPLLASQYATVPIVNGGDGGHQHPTQTLTDLITIHHNKGKIENLKVAFCGDLLFGRTVHSLLKTLSRFPNMEFVFISPSELKIPKHLKDEVIKSNNVEIVETTFLEKHMSEIDILYMTRIQKERFFNEEEYVKLKDSYILDLQKLRNAKEDLLIMHPLPRVNEIHPEVDTDTRAKYFEQAKLGVYVRMALMALQLGVIESC</sequence>
<feature type="chain" id="PRO_0000321067" description="Aspartate carbamoyltransferase catalytic subunit">
    <location>
        <begin position="1"/>
        <end position="311"/>
    </location>
</feature>
<feature type="binding site" evidence="1">
    <location>
        <position position="55"/>
    </location>
    <ligand>
        <name>carbamoyl phosphate</name>
        <dbReference type="ChEBI" id="CHEBI:58228"/>
    </ligand>
</feature>
<feature type="binding site" evidence="1">
    <location>
        <position position="56"/>
    </location>
    <ligand>
        <name>carbamoyl phosphate</name>
        <dbReference type="ChEBI" id="CHEBI:58228"/>
    </ligand>
</feature>
<feature type="binding site" evidence="1">
    <location>
        <position position="84"/>
    </location>
    <ligand>
        <name>L-aspartate</name>
        <dbReference type="ChEBI" id="CHEBI:29991"/>
    </ligand>
</feature>
<feature type="binding site" evidence="1">
    <location>
        <position position="105"/>
    </location>
    <ligand>
        <name>carbamoyl phosphate</name>
        <dbReference type="ChEBI" id="CHEBI:58228"/>
    </ligand>
</feature>
<feature type="binding site" evidence="1">
    <location>
        <position position="133"/>
    </location>
    <ligand>
        <name>carbamoyl phosphate</name>
        <dbReference type="ChEBI" id="CHEBI:58228"/>
    </ligand>
</feature>
<feature type="binding site" evidence="1">
    <location>
        <position position="136"/>
    </location>
    <ligand>
        <name>carbamoyl phosphate</name>
        <dbReference type="ChEBI" id="CHEBI:58228"/>
    </ligand>
</feature>
<feature type="binding site" evidence="1">
    <location>
        <position position="166"/>
    </location>
    <ligand>
        <name>L-aspartate</name>
        <dbReference type="ChEBI" id="CHEBI:29991"/>
    </ligand>
</feature>
<feature type="binding site" evidence="1">
    <location>
        <position position="229"/>
    </location>
    <ligand>
        <name>L-aspartate</name>
        <dbReference type="ChEBI" id="CHEBI:29991"/>
    </ligand>
</feature>
<feature type="binding site" evidence="1">
    <location>
        <position position="268"/>
    </location>
    <ligand>
        <name>carbamoyl phosphate</name>
        <dbReference type="ChEBI" id="CHEBI:58228"/>
    </ligand>
</feature>
<feature type="binding site" evidence="1">
    <location>
        <position position="269"/>
    </location>
    <ligand>
        <name>carbamoyl phosphate</name>
        <dbReference type="ChEBI" id="CHEBI:58228"/>
    </ligand>
</feature>
<dbReference type="EC" id="2.1.3.2" evidence="1"/>
<dbReference type="EMBL" id="CP000724">
    <property type="protein sequence ID" value="ABR50280.1"/>
    <property type="molecule type" value="Genomic_DNA"/>
</dbReference>
<dbReference type="RefSeq" id="WP_012065228.1">
    <property type="nucleotide sequence ID" value="NC_009633.1"/>
</dbReference>
<dbReference type="SMR" id="A6TVR2"/>
<dbReference type="STRING" id="293826.Amet_4200"/>
<dbReference type="KEGG" id="amt:Amet_4200"/>
<dbReference type="eggNOG" id="COG0540">
    <property type="taxonomic scope" value="Bacteria"/>
</dbReference>
<dbReference type="HOGENOM" id="CLU_043846_1_2_9"/>
<dbReference type="OrthoDB" id="9774690at2"/>
<dbReference type="UniPathway" id="UPA00070">
    <property type="reaction ID" value="UER00116"/>
</dbReference>
<dbReference type="Proteomes" id="UP000001572">
    <property type="component" value="Chromosome"/>
</dbReference>
<dbReference type="GO" id="GO:0016597">
    <property type="term" value="F:amino acid binding"/>
    <property type="evidence" value="ECO:0007669"/>
    <property type="project" value="InterPro"/>
</dbReference>
<dbReference type="GO" id="GO:0004070">
    <property type="term" value="F:aspartate carbamoyltransferase activity"/>
    <property type="evidence" value="ECO:0007669"/>
    <property type="project" value="UniProtKB-UniRule"/>
</dbReference>
<dbReference type="GO" id="GO:0006207">
    <property type="term" value="P:'de novo' pyrimidine nucleobase biosynthetic process"/>
    <property type="evidence" value="ECO:0007669"/>
    <property type="project" value="InterPro"/>
</dbReference>
<dbReference type="GO" id="GO:0044205">
    <property type="term" value="P:'de novo' UMP biosynthetic process"/>
    <property type="evidence" value="ECO:0007669"/>
    <property type="project" value="UniProtKB-UniRule"/>
</dbReference>
<dbReference type="GO" id="GO:0006520">
    <property type="term" value="P:amino acid metabolic process"/>
    <property type="evidence" value="ECO:0007669"/>
    <property type="project" value="InterPro"/>
</dbReference>
<dbReference type="FunFam" id="3.40.50.1370:FF:000002">
    <property type="entry name" value="Aspartate carbamoyltransferase 2"/>
    <property type="match status" value="1"/>
</dbReference>
<dbReference type="Gene3D" id="3.40.50.1370">
    <property type="entry name" value="Aspartate/ornithine carbamoyltransferase"/>
    <property type="match status" value="2"/>
</dbReference>
<dbReference type="HAMAP" id="MF_00001">
    <property type="entry name" value="Asp_carb_tr"/>
    <property type="match status" value="1"/>
</dbReference>
<dbReference type="InterPro" id="IPR006132">
    <property type="entry name" value="Asp/Orn_carbamoyltranf_P-bd"/>
</dbReference>
<dbReference type="InterPro" id="IPR006130">
    <property type="entry name" value="Asp/Orn_carbamoylTrfase"/>
</dbReference>
<dbReference type="InterPro" id="IPR036901">
    <property type="entry name" value="Asp/Orn_carbamoylTrfase_sf"/>
</dbReference>
<dbReference type="InterPro" id="IPR002082">
    <property type="entry name" value="Asp_carbamoyltransf"/>
</dbReference>
<dbReference type="InterPro" id="IPR006131">
    <property type="entry name" value="Asp_carbamoyltransf_Asp/Orn-bd"/>
</dbReference>
<dbReference type="NCBIfam" id="TIGR00670">
    <property type="entry name" value="asp_carb_tr"/>
    <property type="match status" value="1"/>
</dbReference>
<dbReference type="NCBIfam" id="NF002032">
    <property type="entry name" value="PRK00856.1"/>
    <property type="match status" value="1"/>
</dbReference>
<dbReference type="PANTHER" id="PTHR45753:SF6">
    <property type="entry name" value="ASPARTATE CARBAMOYLTRANSFERASE"/>
    <property type="match status" value="1"/>
</dbReference>
<dbReference type="PANTHER" id="PTHR45753">
    <property type="entry name" value="ORNITHINE CARBAMOYLTRANSFERASE, MITOCHONDRIAL"/>
    <property type="match status" value="1"/>
</dbReference>
<dbReference type="Pfam" id="PF00185">
    <property type="entry name" value="OTCace"/>
    <property type="match status" value="1"/>
</dbReference>
<dbReference type="Pfam" id="PF02729">
    <property type="entry name" value="OTCace_N"/>
    <property type="match status" value="1"/>
</dbReference>
<dbReference type="PRINTS" id="PR00100">
    <property type="entry name" value="AOTCASE"/>
</dbReference>
<dbReference type="PRINTS" id="PR00101">
    <property type="entry name" value="ATCASE"/>
</dbReference>
<dbReference type="SUPFAM" id="SSF53671">
    <property type="entry name" value="Aspartate/ornithine carbamoyltransferase"/>
    <property type="match status" value="1"/>
</dbReference>
<dbReference type="PROSITE" id="PS00097">
    <property type="entry name" value="CARBAMOYLTRANSFERASE"/>
    <property type="match status" value="1"/>
</dbReference>
<name>PYRB_ALKMQ</name>
<gene>
    <name evidence="1" type="primary">pyrB</name>
    <name type="ordered locus">Amet_4200</name>
</gene>
<comment type="function">
    <text evidence="1">Catalyzes the condensation of carbamoyl phosphate and aspartate to form carbamoyl aspartate and inorganic phosphate, the committed step in the de novo pyrimidine nucleotide biosynthesis pathway.</text>
</comment>
<comment type="catalytic activity">
    <reaction evidence="1">
        <text>carbamoyl phosphate + L-aspartate = N-carbamoyl-L-aspartate + phosphate + H(+)</text>
        <dbReference type="Rhea" id="RHEA:20013"/>
        <dbReference type="ChEBI" id="CHEBI:15378"/>
        <dbReference type="ChEBI" id="CHEBI:29991"/>
        <dbReference type="ChEBI" id="CHEBI:32814"/>
        <dbReference type="ChEBI" id="CHEBI:43474"/>
        <dbReference type="ChEBI" id="CHEBI:58228"/>
        <dbReference type="EC" id="2.1.3.2"/>
    </reaction>
</comment>
<comment type="pathway">
    <text evidence="1">Pyrimidine metabolism; UMP biosynthesis via de novo pathway; (S)-dihydroorotate from bicarbonate: step 2/3.</text>
</comment>
<comment type="subunit">
    <text evidence="1">Heterododecamer (2C3:3R2) of six catalytic PyrB chains organized as two trimers (C3), and six regulatory PyrI chains organized as three dimers (R2).</text>
</comment>
<comment type="similarity">
    <text evidence="1">Belongs to the aspartate/ornithine carbamoyltransferase superfamily. ATCase family.</text>
</comment>
<accession>A6TVR2</accession>
<evidence type="ECO:0000255" key="1">
    <source>
        <dbReference type="HAMAP-Rule" id="MF_00001"/>
    </source>
</evidence>
<protein>
    <recommendedName>
        <fullName evidence="1">Aspartate carbamoyltransferase catalytic subunit</fullName>
        <ecNumber evidence="1">2.1.3.2</ecNumber>
    </recommendedName>
    <alternativeName>
        <fullName evidence="1">Aspartate transcarbamylase</fullName>
        <shortName evidence="1">ATCase</shortName>
    </alternativeName>
</protein>
<organism>
    <name type="scientific">Alkaliphilus metalliredigens (strain QYMF)</name>
    <dbReference type="NCBI Taxonomy" id="293826"/>
    <lineage>
        <taxon>Bacteria</taxon>
        <taxon>Bacillati</taxon>
        <taxon>Bacillota</taxon>
        <taxon>Clostridia</taxon>
        <taxon>Peptostreptococcales</taxon>
        <taxon>Natronincolaceae</taxon>
        <taxon>Alkaliphilus</taxon>
    </lineage>
</organism>
<reference key="1">
    <citation type="journal article" date="2016" name="Genome Announc.">
        <title>Complete genome sequence of Alkaliphilus metalliredigens strain QYMF, an alkaliphilic and metal-reducing bacterium isolated from borax-contaminated leachate ponds.</title>
        <authorList>
            <person name="Hwang C."/>
            <person name="Copeland A."/>
            <person name="Lucas S."/>
            <person name="Lapidus A."/>
            <person name="Barry K."/>
            <person name="Detter J.C."/>
            <person name="Glavina Del Rio T."/>
            <person name="Hammon N."/>
            <person name="Israni S."/>
            <person name="Dalin E."/>
            <person name="Tice H."/>
            <person name="Pitluck S."/>
            <person name="Chertkov O."/>
            <person name="Brettin T."/>
            <person name="Bruce D."/>
            <person name="Han C."/>
            <person name="Schmutz J."/>
            <person name="Larimer F."/>
            <person name="Land M.L."/>
            <person name="Hauser L."/>
            <person name="Kyrpides N."/>
            <person name="Mikhailova N."/>
            <person name="Ye Q."/>
            <person name="Zhou J."/>
            <person name="Richardson P."/>
            <person name="Fields M.W."/>
        </authorList>
    </citation>
    <scope>NUCLEOTIDE SEQUENCE [LARGE SCALE GENOMIC DNA]</scope>
    <source>
        <strain>QYMF</strain>
    </source>
</reference>
<keyword id="KW-0665">Pyrimidine biosynthesis</keyword>
<keyword id="KW-1185">Reference proteome</keyword>
<keyword id="KW-0808">Transferase</keyword>